<sequence>MADLKITWLGHAAFLLESEKKLLIDPFISENPKSPCSPEDLNPDIIAVTHGHRDHLGDTIEIGARTGCRIISIHEVANYIKSKGVFAEGMNKGGTVEVEGIALTMTHALHSSSIDASGFSFDGGSPAGFVINIGGYSVYHSGDTGVFGDMQLIGELYKPEIALLPIGSRFTMGIKEAVKAVELIEPRIVVPMHYNTFDVIRQDPEEFRKAVEAKVDTKVIIMSPGESIQL</sequence>
<feature type="chain" id="PRO_0000156396" description="UPF0173 metal-dependent hydrolase MM_2300">
    <location>
        <begin position="1"/>
        <end position="230"/>
    </location>
</feature>
<evidence type="ECO:0000255" key="1">
    <source>
        <dbReference type="HAMAP-Rule" id="MF_00457"/>
    </source>
</evidence>
<gene>
    <name type="ordered locus">MM_2300</name>
</gene>
<name>Y2300_METMA</name>
<accession>Q8PUN2</accession>
<organism>
    <name type="scientific">Methanosarcina mazei (strain ATCC BAA-159 / DSM 3647 / Goe1 / Go1 / JCM 11833 / OCM 88)</name>
    <name type="common">Methanosarcina frisia</name>
    <dbReference type="NCBI Taxonomy" id="192952"/>
    <lineage>
        <taxon>Archaea</taxon>
        <taxon>Methanobacteriati</taxon>
        <taxon>Methanobacteriota</taxon>
        <taxon>Stenosarchaea group</taxon>
        <taxon>Methanomicrobia</taxon>
        <taxon>Methanosarcinales</taxon>
        <taxon>Methanosarcinaceae</taxon>
        <taxon>Methanosarcina</taxon>
    </lineage>
</organism>
<keyword id="KW-0378">Hydrolase</keyword>
<protein>
    <recommendedName>
        <fullName evidence="1">UPF0173 metal-dependent hydrolase MM_2300</fullName>
    </recommendedName>
</protein>
<reference key="1">
    <citation type="journal article" date="2002" name="J. Mol. Microbiol. Biotechnol.">
        <title>The genome of Methanosarcina mazei: evidence for lateral gene transfer between Bacteria and Archaea.</title>
        <authorList>
            <person name="Deppenmeier U."/>
            <person name="Johann A."/>
            <person name="Hartsch T."/>
            <person name="Merkl R."/>
            <person name="Schmitz R.A."/>
            <person name="Martinez-Arias R."/>
            <person name="Henne A."/>
            <person name="Wiezer A."/>
            <person name="Baeumer S."/>
            <person name="Jacobi C."/>
            <person name="Brueggemann H."/>
            <person name="Lienard T."/>
            <person name="Christmann A."/>
            <person name="Boemecke M."/>
            <person name="Steckel S."/>
            <person name="Bhattacharyya A."/>
            <person name="Lykidis A."/>
            <person name="Overbeek R."/>
            <person name="Klenk H.-P."/>
            <person name="Gunsalus R.P."/>
            <person name="Fritz H.-J."/>
            <person name="Gottschalk G."/>
        </authorList>
    </citation>
    <scope>NUCLEOTIDE SEQUENCE [LARGE SCALE GENOMIC DNA]</scope>
    <source>
        <strain>ATCC BAA-159 / DSM 3647 / Goe1 / Go1 / JCM 11833 / OCM 88</strain>
    </source>
</reference>
<dbReference type="EMBL" id="AE008384">
    <property type="protein sequence ID" value="AAM31996.1"/>
    <property type="molecule type" value="Genomic_DNA"/>
</dbReference>
<dbReference type="RefSeq" id="WP_011034225.1">
    <property type="nucleotide sequence ID" value="NC_003901.1"/>
</dbReference>
<dbReference type="SMR" id="Q8PUN2"/>
<dbReference type="DNASU" id="1480642"/>
<dbReference type="KEGG" id="mma:MM_2300"/>
<dbReference type="PATRIC" id="fig|192952.21.peg.2635"/>
<dbReference type="eggNOG" id="arCOG00497">
    <property type="taxonomic scope" value="Archaea"/>
</dbReference>
<dbReference type="HOGENOM" id="CLU_070010_4_0_2"/>
<dbReference type="Proteomes" id="UP000000595">
    <property type="component" value="Chromosome"/>
</dbReference>
<dbReference type="GO" id="GO:0016787">
    <property type="term" value="F:hydrolase activity"/>
    <property type="evidence" value="ECO:0007669"/>
    <property type="project" value="UniProtKB-UniRule"/>
</dbReference>
<dbReference type="Gene3D" id="3.60.15.10">
    <property type="entry name" value="Ribonuclease Z/Hydroxyacylglutathione hydrolase-like"/>
    <property type="match status" value="1"/>
</dbReference>
<dbReference type="HAMAP" id="MF_00457">
    <property type="entry name" value="UPF0173"/>
    <property type="match status" value="1"/>
</dbReference>
<dbReference type="InterPro" id="IPR001279">
    <property type="entry name" value="Metallo-B-lactamas"/>
</dbReference>
<dbReference type="InterPro" id="IPR036866">
    <property type="entry name" value="RibonucZ/Hydroxyglut_hydro"/>
</dbReference>
<dbReference type="InterPro" id="IPR022877">
    <property type="entry name" value="UPF0173"/>
</dbReference>
<dbReference type="InterPro" id="IPR050114">
    <property type="entry name" value="UPF0173_UPF0282_UlaG_hydrolase"/>
</dbReference>
<dbReference type="NCBIfam" id="NF001911">
    <property type="entry name" value="PRK00685.1"/>
    <property type="match status" value="1"/>
</dbReference>
<dbReference type="PANTHER" id="PTHR43546:SF3">
    <property type="entry name" value="UPF0173 METAL-DEPENDENT HYDROLASE MJ1163"/>
    <property type="match status" value="1"/>
</dbReference>
<dbReference type="PANTHER" id="PTHR43546">
    <property type="entry name" value="UPF0173 METAL-DEPENDENT HYDROLASE MJ1163-RELATED"/>
    <property type="match status" value="1"/>
</dbReference>
<dbReference type="Pfam" id="PF13483">
    <property type="entry name" value="Lactamase_B_3"/>
    <property type="match status" value="1"/>
</dbReference>
<dbReference type="SMART" id="SM00849">
    <property type="entry name" value="Lactamase_B"/>
    <property type="match status" value="1"/>
</dbReference>
<dbReference type="SUPFAM" id="SSF56281">
    <property type="entry name" value="Metallo-hydrolase/oxidoreductase"/>
    <property type="match status" value="1"/>
</dbReference>
<comment type="similarity">
    <text evidence="1">Belongs to the UPF0173 family.</text>
</comment>
<proteinExistence type="inferred from homology"/>